<feature type="chain" id="PRO_1000010684" description="Elongation factor P">
    <location>
        <begin position="1"/>
        <end position="185"/>
    </location>
</feature>
<reference key="1">
    <citation type="journal article" date="2004" name="J. Mol. Microbiol. Biotechnol.">
        <title>The complete genome sequence of Bacillus licheniformis DSM13, an organism with great industrial potential.</title>
        <authorList>
            <person name="Veith B."/>
            <person name="Herzberg C."/>
            <person name="Steckel S."/>
            <person name="Feesche J."/>
            <person name="Maurer K.H."/>
            <person name="Ehrenreich P."/>
            <person name="Baeumer S."/>
            <person name="Henne A."/>
            <person name="Liesegang H."/>
            <person name="Merkl R."/>
            <person name="Ehrenreich A."/>
            <person name="Gottschalk G."/>
        </authorList>
    </citation>
    <scope>NUCLEOTIDE SEQUENCE [LARGE SCALE GENOMIC DNA]</scope>
    <source>
        <strain>ATCC 14580 / DSM 13 / JCM 2505 / CCUG 7422 / NBRC 12200 / NCIMB 9375 / NCTC 10341 / NRRL NRS-1264 / Gibson 46</strain>
    </source>
</reference>
<reference key="2">
    <citation type="journal article" date="2004" name="Genome Biol.">
        <title>Complete genome sequence of the industrial bacterium Bacillus licheniformis and comparisons with closely related Bacillus species.</title>
        <authorList>
            <person name="Rey M.W."/>
            <person name="Ramaiya P."/>
            <person name="Nelson B.A."/>
            <person name="Brody-Karpin S.D."/>
            <person name="Zaretsky E.J."/>
            <person name="Tang M."/>
            <person name="Lopez de Leon A."/>
            <person name="Xiang H."/>
            <person name="Gusti V."/>
            <person name="Clausen I.G."/>
            <person name="Olsen P.B."/>
            <person name="Rasmussen M.D."/>
            <person name="Andersen J.T."/>
            <person name="Joergensen P.L."/>
            <person name="Larsen T.S."/>
            <person name="Sorokin A."/>
            <person name="Bolotin A."/>
            <person name="Lapidus A."/>
            <person name="Galleron N."/>
            <person name="Ehrlich S.D."/>
            <person name="Berka R.M."/>
        </authorList>
    </citation>
    <scope>NUCLEOTIDE SEQUENCE [LARGE SCALE GENOMIC DNA]</scope>
    <source>
        <strain>ATCC 14580 / DSM 13 / JCM 2505 / CCUG 7422 / NBRC 12200 / NCIMB 9375 / NCTC 10341 / NRRL NRS-1264 / Gibson 46</strain>
    </source>
</reference>
<protein>
    <recommendedName>
        <fullName evidence="1">Elongation factor P</fullName>
        <shortName evidence="1">EF-P</shortName>
    </recommendedName>
</protein>
<keyword id="KW-0963">Cytoplasm</keyword>
<keyword id="KW-0251">Elongation factor</keyword>
<keyword id="KW-0648">Protein biosynthesis</keyword>
<keyword id="KW-1185">Reference proteome</keyword>
<organism>
    <name type="scientific">Bacillus licheniformis (strain ATCC 14580 / DSM 13 / JCM 2505 / CCUG 7422 / NBRC 12200 / NCIMB 9375 / NCTC 10341 / NRRL NRS-1264 / Gibson 46)</name>
    <dbReference type="NCBI Taxonomy" id="279010"/>
    <lineage>
        <taxon>Bacteria</taxon>
        <taxon>Bacillati</taxon>
        <taxon>Bacillota</taxon>
        <taxon>Bacilli</taxon>
        <taxon>Bacillales</taxon>
        <taxon>Bacillaceae</taxon>
        <taxon>Bacillus</taxon>
    </lineage>
</organism>
<comment type="function">
    <text evidence="1">Involved in peptide bond synthesis. Stimulates efficient translation and peptide-bond synthesis on native or reconstituted 70S ribosomes in vitro. Probably functions indirectly by altering the affinity of the ribosome for aminoacyl-tRNA, thus increasing their reactivity as acceptors for peptidyl transferase.</text>
</comment>
<comment type="pathway">
    <text evidence="1">Protein biosynthesis; polypeptide chain elongation.</text>
</comment>
<comment type="subcellular location">
    <subcellularLocation>
        <location evidence="1">Cytoplasm</location>
    </subcellularLocation>
</comment>
<comment type="similarity">
    <text evidence="1">Belongs to the elongation factor P family.</text>
</comment>
<sequence>MISVNDFRTGLTIEVDGGIWRVVDFQHVKPGKGAAFVRSKLRNLRTGAIQEKTFRAGEKVARAQIETKTMQYLYANGDQHVFMDTTSYEQLELNEKQIEHELKFLLENMSVQIMMYQTETIGIELPNTVELKVVETEPGIKGDTASGGTKPAKTETGLVVNVPFFVNEGDTLVVNTSDGSYVSRA</sequence>
<proteinExistence type="inferred from homology"/>
<accession>Q65HH4</accession>
<accession>Q62SX8</accession>
<dbReference type="EMBL" id="CP000002">
    <property type="protein sequence ID" value="AAU24131.1"/>
    <property type="molecule type" value="Genomic_DNA"/>
</dbReference>
<dbReference type="EMBL" id="AE017333">
    <property type="protein sequence ID" value="AAU41490.1"/>
    <property type="molecule type" value="Genomic_DNA"/>
</dbReference>
<dbReference type="RefSeq" id="WP_003183413.1">
    <property type="nucleotide sequence ID" value="NC_006322.1"/>
</dbReference>
<dbReference type="SMR" id="Q65HH4"/>
<dbReference type="STRING" id="279010.BL01542"/>
<dbReference type="GeneID" id="92860789"/>
<dbReference type="KEGG" id="bld:BLi02616"/>
<dbReference type="KEGG" id="bli:BL01542"/>
<dbReference type="eggNOG" id="COG0231">
    <property type="taxonomic scope" value="Bacteria"/>
</dbReference>
<dbReference type="HOGENOM" id="CLU_074944_0_1_9"/>
<dbReference type="UniPathway" id="UPA00345"/>
<dbReference type="Proteomes" id="UP000000606">
    <property type="component" value="Chromosome"/>
</dbReference>
<dbReference type="GO" id="GO:0005737">
    <property type="term" value="C:cytoplasm"/>
    <property type="evidence" value="ECO:0007669"/>
    <property type="project" value="UniProtKB-SubCell"/>
</dbReference>
<dbReference type="GO" id="GO:0003746">
    <property type="term" value="F:translation elongation factor activity"/>
    <property type="evidence" value="ECO:0007669"/>
    <property type="project" value="UniProtKB-UniRule"/>
</dbReference>
<dbReference type="GO" id="GO:0043043">
    <property type="term" value="P:peptide biosynthetic process"/>
    <property type="evidence" value="ECO:0007669"/>
    <property type="project" value="InterPro"/>
</dbReference>
<dbReference type="CDD" id="cd04470">
    <property type="entry name" value="S1_EF-P_repeat_1"/>
    <property type="match status" value="1"/>
</dbReference>
<dbReference type="CDD" id="cd05794">
    <property type="entry name" value="S1_EF-P_repeat_2"/>
    <property type="match status" value="1"/>
</dbReference>
<dbReference type="FunFam" id="2.30.30.30:FF:000010">
    <property type="entry name" value="Elongation factor P"/>
    <property type="match status" value="1"/>
</dbReference>
<dbReference type="FunFam" id="2.40.50.140:FF:000004">
    <property type="entry name" value="Elongation factor P"/>
    <property type="match status" value="1"/>
</dbReference>
<dbReference type="FunFam" id="2.40.50.140:FF:000009">
    <property type="entry name" value="Elongation factor P"/>
    <property type="match status" value="1"/>
</dbReference>
<dbReference type="Gene3D" id="2.30.30.30">
    <property type="match status" value="1"/>
</dbReference>
<dbReference type="Gene3D" id="2.40.50.140">
    <property type="entry name" value="Nucleic acid-binding proteins"/>
    <property type="match status" value="2"/>
</dbReference>
<dbReference type="HAMAP" id="MF_00141">
    <property type="entry name" value="EF_P"/>
    <property type="match status" value="1"/>
</dbReference>
<dbReference type="InterPro" id="IPR015365">
    <property type="entry name" value="Elong-fact-P_C"/>
</dbReference>
<dbReference type="InterPro" id="IPR012340">
    <property type="entry name" value="NA-bd_OB-fold"/>
</dbReference>
<dbReference type="InterPro" id="IPR014722">
    <property type="entry name" value="Rib_uL2_dom2"/>
</dbReference>
<dbReference type="InterPro" id="IPR020599">
    <property type="entry name" value="Transl_elong_fac_P/YeiP"/>
</dbReference>
<dbReference type="InterPro" id="IPR013185">
    <property type="entry name" value="Transl_elong_KOW-like"/>
</dbReference>
<dbReference type="InterPro" id="IPR001059">
    <property type="entry name" value="Transl_elong_P/YeiP_cen"/>
</dbReference>
<dbReference type="InterPro" id="IPR013852">
    <property type="entry name" value="Transl_elong_P/YeiP_CS"/>
</dbReference>
<dbReference type="InterPro" id="IPR011768">
    <property type="entry name" value="Transl_elongation_fac_P"/>
</dbReference>
<dbReference type="InterPro" id="IPR008991">
    <property type="entry name" value="Translation_prot_SH3-like_sf"/>
</dbReference>
<dbReference type="NCBIfam" id="TIGR00038">
    <property type="entry name" value="efp"/>
    <property type="match status" value="1"/>
</dbReference>
<dbReference type="NCBIfam" id="NF001810">
    <property type="entry name" value="PRK00529.1"/>
    <property type="match status" value="1"/>
</dbReference>
<dbReference type="PANTHER" id="PTHR30053">
    <property type="entry name" value="ELONGATION FACTOR P"/>
    <property type="match status" value="1"/>
</dbReference>
<dbReference type="PANTHER" id="PTHR30053:SF12">
    <property type="entry name" value="ELONGATION FACTOR P (EF-P) FAMILY PROTEIN"/>
    <property type="match status" value="1"/>
</dbReference>
<dbReference type="Pfam" id="PF01132">
    <property type="entry name" value="EFP"/>
    <property type="match status" value="1"/>
</dbReference>
<dbReference type="Pfam" id="PF08207">
    <property type="entry name" value="EFP_N"/>
    <property type="match status" value="1"/>
</dbReference>
<dbReference type="Pfam" id="PF09285">
    <property type="entry name" value="Elong-fact-P_C"/>
    <property type="match status" value="1"/>
</dbReference>
<dbReference type="PIRSF" id="PIRSF005901">
    <property type="entry name" value="EF-P"/>
    <property type="match status" value="1"/>
</dbReference>
<dbReference type="SMART" id="SM01185">
    <property type="entry name" value="EFP"/>
    <property type="match status" value="1"/>
</dbReference>
<dbReference type="SMART" id="SM00841">
    <property type="entry name" value="Elong-fact-P_C"/>
    <property type="match status" value="1"/>
</dbReference>
<dbReference type="SUPFAM" id="SSF50249">
    <property type="entry name" value="Nucleic acid-binding proteins"/>
    <property type="match status" value="2"/>
</dbReference>
<dbReference type="SUPFAM" id="SSF50104">
    <property type="entry name" value="Translation proteins SH3-like domain"/>
    <property type="match status" value="1"/>
</dbReference>
<dbReference type="PROSITE" id="PS01275">
    <property type="entry name" value="EFP"/>
    <property type="match status" value="1"/>
</dbReference>
<evidence type="ECO:0000255" key="1">
    <source>
        <dbReference type="HAMAP-Rule" id="MF_00141"/>
    </source>
</evidence>
<gene>
    <name evidence="1" type="primary">efp</name>
    <name type="ordered locus">BLi02616</name>
    <name type="ordered locus">BL01542</name>
</gene>
<name>EFP_BACLD</name>